<dbReference type="EC" id="3.2.2.-" evidence="1"/>
<dbReference type="EMBL" id="CP000253">
    <property type="protein sequence ID" value="ABD31630.1"/>
    <property type="molecule type" value="Genomic_DNA"/>
</dbReference>
<dbReference type="RefSeq" id="WP_000348300.1">
    <property type="nucleotide sequence ID" value="NZ_LS483365.1"/>
</dbReference>
<dbReference type="RefSeq" id="YP_501082.1">
    <property type="nucleotide sequence ID" value="NC_007795.1"/>
</dbReference>
<dbReference type="SMR" id="Q2FVS1"/>
<dbReference type="STRING" id="93061.SAOUHSC_02621"/>
<dbReference type="PaxDb" id="1280-SAXN108_2594"/>
<dbReference type="GeneID" id="3921398"/>
<dbReference type="KEGG" id="sao:SAOUHSC_02621"/>
<dbReference type="PATRIC" id="fig|93061.5.peg.2370"/>
<dbReference type="eggNOG" id="COG2094">
    <property type="taxonomic scope" value="Bacteria"/>
</dbReference>
<dbReference type="HOGENOM" id="CLU_060471_2_0_9"/>
<dbReference type="OrthoDB" id="9794313at2"/>
<dbReference type="PRO" id="PR:Q2FVS1"/>
<dbReference type="Proteomes" id="UP000008816">
    <property type="component" value="Chromosome"/>
</dbReference>
<dbReference type="GO" id="GO:0003905">
    <property type="term" value="F:alkylbase DNA N-glycosylase activity"/>
    <property type="evidence" value="ECO:0000318"/>
    <property type="project" value="GO_Central"/>
</dbReference>
<dbReference type="GO" id="GO:0003677">
    <property type="term" value="F:DNA binding"/>
    <property type="evidence" value="ECO:0007669"/>
    <property type="project" value="InterPro"/>
</dbReference>
<dbReference type="GO" id="GO:0006284">
    <property type="term" value="P:base-excision repair"/>
    <property type="evidence" value="ECO:0000318"/>
    <property type="project" value="GO_Central"/>
</dbReference>
<dbReference type="CDD" id="cd00540">
    <property type="entry name" value="AAG"/>
    <property type="match status" value="1"/>
</dbReference>
<dbReference type="FunFam" id="3.10.300.10:FF:000001">
    <property type="entry name" value="Putative 3-methyladenine DNA glycosylase"/>
    <property type="match status" value="1"/>
</dbReference>
<dbReference type="Gene3D" id="3.10.300.10">
    <property type="entry name" value="Methylpurine-DNA glycosylase (MPG)"/>
    <property type="match status" value="1"/>
</dbReference>
<dbReference type="HAMAP" id="MF_00527">
    <property type="entry name" value="3MGH"/>
    <property type="match status" value="1"/>
</dbReference>
<dbReference type="InterPro" id="IPR011034">
    <property type="entry name" value="Formyl_transferase-like_C_sf"/>
</dbReference>
<dbReference type="InterPro" id="IPR003180">
    <property type="entry name" value="MPG"/>
</dbReference>
<dbReference type="InterPro" id="IPR036995">
    <property type="entry name" value="MPG_sf"/>
</dbReference>
<dbReference type="NCBIfam" id="TIGR00567">
    <property type="entry name" value="3mg"/>
    <property type="match status" value="1"/>
</dbReference>
<dbReference type="PANTHER" id="PTHR10429">
    <property type="entry name" value="DNA-3-METHYLADENINE GLYCOSYLASE"/>
    <property type="match status" value="1"/>
</dbReference>
<dbReference type="PANTHER" id="PTHR10429:SF0">
    <property type="entry name" value="DNA-3-METHYLADENINE GLYCOSYLASE"/>
    <property type="match status" value="1"/>
</dbReference>
<dbReference type="Pfam" id="PF02245">
    <property type="entry name" value="Pur_DNA_glyco"/>
    <property type="match status" value="1"/>
</dbReference>
<dbReference type="SUPFAM" id="SSF50486">
    <property type="entry name" value="FMT C-terminal domain-like"/>
    <property type="match status" value="1"/>
</dbReference>
<accession>Q2FVS1</accession>
<proteinExistence type="inferred from homology"/>
<keyword id="KW-0227">DNA damage</keyword>
<keyword id="KW-0234">DNA repair</keyword>
<keyword id="KW-0378">Hydrolase</keyword>
<keyword id="KW-1185">Reference proteome</keyword>
<reference key="1">
    <citation type="book" date="2006" name="Gram positive pathogens, 2nd edition">
        <title>The Staphylococcus aureus NCTC 8325 genome.</title>
        <editorList>
            <person name="Fischetti V."/>
            <person name="Novick R."/>
            <person name="Ferretti J."/>
            <person name="Portnoy D."/>
            <person name="Rood J."/>
        </editorList>
        <authorList>
            <person name="Gillaspy A.F."/>
            <person name="Worrell V."/>
            <person name="Orvis J."/>
            <person name="Roe B.A."/>
            <person name="Dyer D.W."/>
            <person name="Iandolo J.J."/>
        </authorList>
    </citation>
    <scope>NUCLEOTIDE SEQUENCE [LARGE SCALE GENOMIC DNA]</scope>
    <source>
        <strain>NCTC 8325 / PS 47</strain>
    </source>
</reference>
<name>3MGH_STAA8</name>
<protein>
    <recommendedName>
        <fullName evidence="1">Putative 3-methyladenine DNA glycosylase</fullName>
        <ecNumber evidence="1">3.2.2.-</ecNumber>
    </recommendedName>
</protein>
<feature type="chain" id="PRO_0000265061" description="Putative 3-methyladenine DNA glycosylase">
    <location>
        <begin position="1"/>
        <end position="202"/>
    </location>
</feature>
<evidence type="ECO:0000255" key="1">
    <source>
        <dbReference type="HAMAP-Rule" id="MF_00527"/>
    </source>
</evidence>
<comment type="similarity">
    <text evidence="1">Belongs to the DNA glycosylase MPG family.</text>
</comment>
<organism>
    <name type="scientific">Staphylococcus aureus (strain NCTC 8325 / PS 47)</name>
    <dbReference type="NCBI Taxonomy" id="93061"/>
    <lineage>
        <taxon>Bacteria</taxon>
        <taxon>Bacillati</taxon>
        <taxon>Bacillota</taxon>
        <taxon>Bacilli</taxon>
        <taxon>Bacillales</taxon>
        <taxon>Staphylococcaceae</taxon>
        <taxon>Staphylococcus</taxon>
    </lineage>
</organism>
<gene>
    <name type="ordered locus">SAOUHSC_02621</name>
</gene>
<sequence length="202" mass="22771">MDFVNNDTRQIAKNLLGVKVIYQDTTQTYTGYIVETEAYLGLNDRAAHGYGGKITPKVTSLYKRGGTIYAHVMHTHLLINFVTKSEGIPEGVLIRAIEPEEGLSAMFRNRGKKGYEVTNGPGKWTKAFNIPRAIDGATLNDCRLSIDTKNRKYPKDIIASPRIGIPNKGDWTHKSLRYTVKGNPFVSRMRKSDCMFPEDTWK</sequence>